<dbReference type="EC" id="2.7.1.59" evidence="1"/>
<dbReference type="EMBL" id="CP000880">
    <property type="protein sequence ID" value="ABX21657.1"/>
    <property type="molecule type" value="Genomic_DNA"/>
</dbReference>
<dbReference type="SMR" id="A9MG95"/>
<dbReference type="STRING" id="41514.SARI_01771"/>
<dbReference type="KEGG" id="ses:SARI_01771"/>
<dbReference type="HOGENOM" id="CLU_036604_0_3_6"/>
<dbReference type="UniPathway" id="UPA00544"/>
<dbReference type="Proteomes" id="UP000002084">
    <property type="component" value="Chromosome"/>
</dbReference>
<dbReference type="GO" id="GO:0005524">
    <property type="term" value="F:ATP binding"/>
    <property type="evidence" value="ECO:0007669"/>
    <property type="project" value="UniProtKB-UniRule"/>
</dbReference>
<dbReference type="GO" id="GO:0045127">
    <property type="term" value="F:N-acetylglucosamine kinase activity"/>
    <property type="evidence" value="ECO:0007669"/>
    <property type="project" value="UniProtKB-UniRule"/>
</dbReference>
<dbReference type="GO" id="GO:0008270">
    <property type="term" value="F:zinc ion binding"/>
    <property type="evidence" value="ECO:0007669"/>
    <property type="project" value="UniProtKB-UniRule"/>
</dbReference>
<dbReference type="GO" id="GO:0006044">
    <property type="term" value="P:N-acetylglucosamine metabolic process"/>
    <property type="evidence" value="ECO:0007669"/>
    <property type="project" value="UniProtKB-UniRule"/>
</dbReference>
<dbReference type="GO" id="GO:0009254">
    <property type="term" value="P:peptidoglycan turnover"/>
    <property type="evidence" value="ECO:0007669"/>
    <property type="project" value="UniProtKB-UniRule"/>
</dbReference>
<dbReference type="CDD" id="cd24057">
    <property type="entry name" value="ASKHA_NBD_ROK_NAGK"/>
    <property type="match status" value="1"/>
</dbReference>
<dbReference type="FunFam" id="3.30.420.40:FF:000049">
    <property type="entry name" value="N-acetyl-D-glucosamine kinase"/>
    <property type="match status" value="1"/>
</dbReference>
<dbReference type="FunFam" id="3.30.420.40:FF:000051">
    <property type="entry name" value="N-acetyl-D-glucosamine kinase"/>
    <property type="match status" value="1"/>
</dbReference>
<dbReference type="Gene3D" id="3.30.420.40">
    <property type="match status" value="2"/>
</dbReference>
<dbReference type="HAMAP" id="MF_01271">
    <property type="entry name" value="GlcNAc_kinase"/>
    <property type="match status" value="1"/>
</dbReference>
<dbReference type="InterPro" id="IPR043129">
    <property type="entry name" value="ATPase_NBD"/>
</dbReference>
<dbReference type="InterPro" id="IPR023505">
    <property type="entry name" value="N-acetyl-D-glucosamine_kinase"/>
</dbReference>
<dbReference type="InterPro" id="IPR000600">
    <property type="entry name" value="ROK"/>
</dbReference>
<dbReference type="InterPro" id="IPR049874">
    <property type="entry name" value="ROK_cs"/>
</dbReference>
<dbReference type="NCBIfam" id="NF009835">
    <property type="entry name" value="PRK13310.1"/>
    <property type="match status" value="1"/>
</dbReference>
<dbReference type="PANTHER" id="PTHR18964:SF162">
    <property type="entry name" value="N-ACETYL-D-GLUCOSAMINE KINASE"/>
    <property type="match status" value="1"/>
</dbReference>
<dbReference type="PANTHER" id="PTHR18964">
    <property type="entry name" value="ROK (REPRESSOR, ORF, KINASE) FAMILY"/>
    <property type="match status" value="1"/>
</dbReference>
<dbReference type="Pfam" id="PF00480">
    <property type="entry name" value="ROK"/>
    <property type="match status" value="1"/>
</dbReference>
<dbReference type="SUPFAM" id="SSF53067">
    <property type="entry name" value="Actin-like ATPase domain"/>
    <property type="match status" value="1"/>
</dbReference>
<dbReference type="PROSITE" id="PS01125">
    <property type="entry name" value="ROK"/>
    <property type="match status" value="1"/>
</dbReference>
<reference key="1">
    <citation type="submission" date="2007-11" db="EMBL/GenBank/DDBJ databases">
        <authorList>
            <consortium name="The Salmonella enterica serovar Arizonae Genome Sequencing Project"/>
            <person name="McClelland M."/>
            <person name="Sanderson E.K."/>
            <person name="Porwollik S."/>
            <person name="Spieth J."/>
            <person name="Clifton W.S."/>
            <person name="Fulton R."/>
            <person name="Chunyan W."/>
            <person name="Wollam A."/>
            <person name="Shah N."/>
            <person name="Pepin K."/>
            <person name="Bhonagiri V."/>
            <person name="Nash W."/>
            <person name="Johnson M."/>
            <person name="Thiruvilangam P."/>
            <person name="Wilson R."/>
        </authorList>
    </citation>
    <scope>NUCLEOTIDE SEQUENCE [LARGE SCALE GENOMIC DNA]</scope>
    <source>
        <strain>ATCC BAA-731 / CDC346-86 / RSK2980</strain>
    </source>
</reference>
<feature type="chain" id="PRO_1000085842" description="N-acetyl-D-glucosamine kinase">
    <location>
        <begin position="1"/>
        <end position="303"/>
    </location>
</feature>
<feature type="binding site" evidence="1">
    <location>
        <begin position="4"/>
        <end position="11"/>
    </location>
    <ligand>
        <name>ATP</name>
        <dbReference type="ChEBI" id="CHEBI:30616"/>
    </ligand>
</feature>
<feature type="binding site" evidence="1">
    <location>
        <begin position="133"/>
        <end position="140"/>
    </location>
    <ligand>
        <name>ATP</name>
        <dbReference type="ChEBI" id="CHEBI:30616"/>
    </ligand>
</feature>
<feature type="binding site" evidence="1">
    <location>
        <position position="157"/>
    </location>
    <ligand>
        <name>Zn(2+)</name>
        <dbReference type="ChEBI" id="CHEBI:29105"/>
    </ligand>
</feature>
<feature type="binding site" evidence="1">
    <location>
        <position position="177"/>
    </location>
    <ligand>
        <name>Zn(2+)</name>
        <dbReference type="ChEBI" id="CHEBI:29105"/>
    </ligand>
</feature>
<feature type="binding site" evidence="1">
    <location>
        <position position="179"/>
    </location>
    <ligand>
        <name>Zn(2+)</name>
        <dbReference type="ChEBI" id="CHEBI:29105"/>
    </ligand>
</feature>
<feature type="binding site" evidence="1">
    <location>
        <position position="184"/>
    </location>
    <ligand>
        <name>Zn(2+)</name>
        <dbReference type="ChEBI" id="CHEBI:29105"/>
    </ligand>
</feature>
<sequence length="303" mass="33022">MFYGFDIGGTKIALGVFDSTRRLQWEKRVPTPHTSYSAFLDAVCELVAEADLRFGVKGAVGIGIPGMPETEDGTLYAANVPAASGKPLRADLSARLERDVRLDNDANCFALSEAWDDEFTQYPLVMGLILGTGVGGGLVLNGKPITGQSYITGEFGHMRLPVDALTLMGFDFPLRRCGCGQMGCIENYLSGRGFAWLYQHYYHQSLQAPEIIALWEQGDKQAHAHVERYLDLLAVCLGNILTIVDPCLLVIGGGLSNFTAITTQLSERLPRHLLPVARVPRIERARHGDAGGMRGAAFLHLTD</sequence>
<evidence type="ECO:0000255" key="1">
    <source>
        <dbReference type="HAMAP-Rule" id="MF_01271"/>
    </source>
</evidence>
<organism>
    <name type="scientific">Salmonella arizonae (strain ATCC BAA-731 / CDC346-86 / RSK2980)</name>
    <dbReference type="NCBI Taxonomy" id="41514"/>
    <lineage>
        <taxon>Bacteria</taxon>
        <taxon>Pseudomonadati</taxon>
        <taxon>Pseudomonadota</taxon>
        <taxon>Gammaproteobacteria</taxon>
        <taxon>Enterobacterales</taxon>
        <taxon>Enterobacteriaceae</taxon>
        <taxon>Salmonella</taxon>
    </lineage>
</organism>
<gene>
    <name evidence="1" type="primary">nagK</name>
    <name type="ordered locus">SARI_01771</name>
</gene>
<name>NAGK_SALAR</name>
<proteinExistence type="inferred from homology"/>
<protein>
    <recommendedName>
        <fullName evidence="1">N-acetyl-D-glucosamine kinase</fullName>
        <ecNumber evidence="1">2.7.1.59</ecNumber>
    </recommendedName>
    <alternativeName>
        <fullName evidence="1">GlcNAc kinase</fullName>
    </alternativeName>
</protein>
<keyword id="KW-0067">ATP-binding</keyword>
<keyword id="KW-0119">Carbohydrate metabolism</keyword>
<keyword id="KW-0418">Kinase</keyword>
<keyword id="KW-0479">Metal-binding</keyword>
<keyword id="KW-0547">Nucleotide-binding</keyword>
<keyword id="KW-1185">Reference proteome</keyword>
<keyword id="KW-0808">Transferase</keyword>
<keyword id="KW-0862">Zinc</keyword>
<accession>A9MG95</accession>
<comment type="function">
    <text evidence="1">Catalyzes the phosphorylation of N-acetyl-D-glucosamine (GlcNAc) derived from cell-wall degradation, yielding GlcNAc-6-P.</text>
</comment>
<comment type="catalytic activity">
    <reaction evidence="1">
        <text>N-acetyl-D-glucosamine + ATP = N-acetyl-D-glucosamine 6-phosphate + ADP + H(+)</text>
        <dbReference type="Rhea" id="RHEA:17417"/>
        <dbReference type="ChEBI" id="CHEBI:15378"/>
        <dbReference type="ChEBI" id="CHEBI:30616"/>
        <dbReference type="ChEBI" id="CHEBI:57513"/>
        <dbReference type="ChEBI" id="CHEBI:456216"/>
        <dbReference type="ChEBI" id="CHEBI:506227"/>
        <dbReference type="EC" id="2.7.1.59"/>
    </reaction>
</comment>
<comment type="pathway">
    <text evidence="1">Cell wall biogenesis; peptidoglycan recycling.</text>
</comment>
<comment type="similarity">
    <text evidence="1">Belongs to the ROK (NagC/XylR) family. NagK subfamily.</text>
</comment>